<proteinExistence type="inferred from homology"/>
<reference key="1">
    <citation type="submission" date="2002-08" db="EMBL/GenBank/DDBJ databases">
        <title>Cold-adapted chaperonins, Cpn60 and Cpn10 from the hydrocarbonoclastic psychrophile, Oleispira antarctica RB8, and their ability to interact with a non-native 102 kDa carboxylesterase.</title>
        <authorList>
            <person name="Ferrer M."/>
            <person name="Lunsdorf H."/>
            <person name="Chernikova T.N."/>
            <person name="Yakimov M.M."/>
            <person name="Golyshin P.N."/>
            <person name="Timmis K.N."/>
        </authorList>
    </citation>
    <scope>NUCLEOTIDE SEQUENCE [GENOMIC DNA]</scope>
    <source>
        <strain>DSM 14852 / LMG 21398 / RB-8</strain>
    </source>
</reference>
<feature type="chain" id="PRO_0000174797" description="Co-chaperonin GroES">
    <location>
        <begin position="1"/>
        <end position="97"/>
    </location>
</feature>
<accession>Q8KM31</accession>
<protein>
    <recommendedName>
        <fullName evidence="1">Co-chaperonin GroES</fullName>
    </recommendedName>
    <alternativeName>
        <fullName evidence="1">10 kDa chaperonin</fullName>
    </alternativeName>
    <alternativeName>
        <fullName evidence="1">Chaperonin-10</fullName>
        <shortName evidence="1">Cpn10</shortName>
    </alternativeName>
</protein>
<comment type="function">
    <text evidence="1">Together with the chaperonin GroEL, plays an essential role in assisting protein folding. The GroEL-GroES system forms a nano-cage that allows encapsulation of the non-native substrate proteins and provides a physical environment optimized to promote and accelerate protein folding. GroES binds to the apical surface of the GroEL ring, thereby capping the opening of the GroEL channel.</text>
</comment>
<comment type="subunit">
    <text evidence="1">Heptamer of 7 subunits arranged in a ring. Interacts with the chaperonin GroEL.</text>
</comment>
<comment type="subcellular location">
    <subcellularLocation>
        <location evidence="1">Cytoplasm</location>
    </subcellularLocation>
</comment>
<comment type="similarity">
    <text evidence="1">Belongs to the GroES chaperonin family.</text>
</comment>
<sequence length="97" mass="10286">MKIRPLHDRIVVRRKEEETATAGGIILPGAAAEKPNQGVVISVGTGRILDNGSVQALAVNEGDVVVFGKYSGQNTIDIDGEELLILNESDIYGVLEA</sequence>
<keyword id="KW-0143">Chaperone</keyword>
<keyword id="KW-0963">Cytoplasm</keyword>
<gene>
    <name evidence="1" type="primary">groES</name>
    <name type="synonym">cpn10</name>
    <name evidence="1" type="synonym">groS</name>
</gene>
<name>CH10_OLEAN</name>
<evidence type="ECO:0000255" key="1">
    <source>
        <dbReference type="HAMAP-Rule" id="MF_00580"/>
    </source>
</evidence>
<organism>
    <name type="scientific">Oleispira antarctica</name>
    <dbReference type="NCBI Taxonomy" id="188908"/>
    <lineage>
        <taxon>Bacteria</taxon>
        <taxon>Pseudomonadati</taxon>
        <taxon>Pseudomonadota</taxon>
        <taxon>Gammaproteobacteria</taxon>
        <taxon>Oceanospirillales</taxon>
        <taxon>Oceanospirillaceae</taxon>
        <taxon>Oleispira</taxon>
    </lineage>
</organism>
<dbReference type="EMBL" id="AJ505131">
    <property type="protein sequence ID" value="CAD43723.1"/>
    <property type="molecule type" value="Genomic_DNA"/>
</dbReference>
<dbReference type="SMR" id="Q8KM31"/>
<dbReference type="GO" id="GO:0005737">
    <property type="term" value="C:cytoplasm"/>
    <property type="evidence" value="ECO:0007669"/>
    <property type="project" value="UniProtKB-SubCell"/>
</dbReference>
<dbReference type="GO" id="GO:0005524">
    <property type="term" value="F:ATP binding"/>
    <property type="evidence" value="ECO:0007669"/>
    <property type="project" value="InterPro"/>
</dbReference>
<dbReference type="GO" id="GO:0046872">
    <property type="term" value="F:metal ion binding"/>
    <property type="evidence" value="ECO:0007669"/>
    <property type="project" value="TreeGrafter"/>
</dbReference>
<dbReference type="GO" id="GO:0044183">
    <property type="term" value="F:protein folding chaperone"/>
    <property type="evidence" value="ECO:0007669"/>
    <property type="project" value="InterPro"/>
</dbReference>
<dbReference type="GO" id="GO:0051087">
    <property type="term" value="F:protein-folding chaperone binding"/>
    <property type="evidence" value="ECO:0007669"/>
    <property type="project" value="TreeGrafter"/>
</dbReference>
<dbReference type="GO" id="GO:0051082">
    <property type="term" value="F:unfolded protein binding"/>
    <property type="evidence" value="ECO:0007669"/>
    <property type="project" value="TreeGrafter"/>
</dbReference>
<dbReference type="GO" id="GO:0051085">
    <property type="term" value="P:chaperone cofactor-dependent protein refolding"/>
    <property type="evidence" value="ECO:0007669"/>
    <property type="project" value="TreeGrafter"/>
</dbReference>
<dbReference type="CDD" id="cd00320">
    <property type="entry name" value="cpn10"/>
    <property type="match status" value="1"/>
</dbReference>
<dbReference type="FunFam" id="2.30.33.40:FF:000001">
    <property type="entry name" value="10 kDa chaperonin"/>
    <property type="match status" value="1"/>
</dbReference>
<dbReference type="Gene3D" id="2.30.33.40">
    <property type="entry name" value="GroES chaperonin"/>
    <property type="match status" value="1"/>
</dbReference>
<dbReference type="HAMAP" id="MF_00580">
    <property type="entry name" value="CH10"/>
    <property type="match status" value="1"/>
</dbReference>
<dbReference type="InterPro" id="IPR020818">
    <property type="entry name" value="Chaperonin_GroES"/>
</dbReference>
<dbReference type="InterPro" id="IPR037124">
    <property type="entry name" value="Chaperonin_GroES_sf"/>
</dbReference>
<dbReference type="InterPro" id="IPR018369">
    <property type="entry name" value="Chaprnonin_Cpn10_CS"/>
</dbReference>
<dbReference type="InterPro" id="IPR011032">
    <property type="entry name" value="GroES-like_sf"/>
</dbReference>
<dbReference type="NCBIfam" id="NF001527">
    <property type="entry name" value="PRK00364.1-2"/>
    <property type="match status" value="1"/>
</dbReference>
<dbReference type="NCBIfam" id="NF001531">
    <property type="entry name" value="PRK00364.2-2"/>
    <property type="match status" value="1"/>
</dbReference>
<dbReference type="NCBIfam" id="NF001533">
    <property type="entry name" value="PRK00364.2-4"/>
    <property type="match status" value="1"/>
</dbReference>
<dbReference type="PANTHER" id="PTHR10772">
    <property type="entry name" value="10 KDA HEAT SHOCK PROTEIN"/>
    <property type="match status" value="1"/>
</dbReference>
<dbReference type="PANTHER" id="PTHR10772:SF58">
    <property type="entry name" value="CO-CHAPERONIN GROES"/>
    <property type="match status" value="1"/>
</dbReference>
<dbReference type="Pfam" id="PF00166">
    <property type="entry name" value="Cpn10"/>
    <property type="match status" value="1"/>
</dbReference>
<dbReference type="PRINTS" id="PR00297">
    <property type="entry name" value="CHAPERONIN10"/>
</dbReference>
<dbReference type="SMART" id="SM00883">
    <property type="entry name" value="Cpn10"/>
    <property type="match status" value="1"/>
</dbReference>
<dbReference type="SUPFAM" id="SSF50129">
    <property type="entry name" value="GroES-like"/>
    <property type="match status" value="1"/>
</dbReference>
<dbReference type="PROSITE" id="PS00681">
    <property type="entry name" value="CHAPERONINS_CPN10"/>
    <property type="match status" value="1"/>
</dbReference>